<proteinExistence type="inferred from homology"/>
<reference key="1">
    <citation type="journal article" date="2006" name="Proc. Natl. Acad. Sci. U.S.A.">
        <title>Comparative genomics of the lactic acid bacteria.</title>
        <authorList>
            <person name="Makarova K.S."/>
            <person name="Slesarev A."/>
            <person name="Wolf Y.I."/>
            <person name="Sorokin A."/>
            <person name="Mirkin B."/>
            <person name="Koonin E.V."/>
            <person name="Pavlov A."/>
            <person name="Pavlova N."/>
            <person name="Karamychev V."/>
            <person name="Polouchine N."/>
            <person name="Shakhova V."/>
            <person name="Grigoriev I."/>
            <person name="Lou Y."/>
            <person name="Rohksar D."/>
            <person name="Lucas S."/>
            <person name="Huang K."/>
            <person name="Goodstein D.M."/>
            <person name="Hawkins T."/>
            <person name="Plengvidhya V."/>
            <person name="Welker D."/>
            <person name="Hughes J."/>
            <person name="Goh Y."/>
            <person name="Benson A."/>
            <person name="Baldwin K."/>
            <person name="Lee J.-H."/>
            <person name="Diaz-Muniz I."/>
            <person name="Dosti B."/>
            <person name="Smeianov V."/>
            <person name="Wechter W."/>
            <person name="Barabote R."/>
            <person name="Lorca G."/>
            <person name="Altermann E."/>
            <person name="Barrangou R."/>
            <person name="Ganesan B."/>
            <person name="Xie Y."/>
            <person name="Rawsthorne H."/>
            <person name="Tamir D."/>
            <person name="Parker C."/>
            <person name="Breidt F."/>
            <person name="Broadbent J.R."/>
            <person name="Hutkins R."/>
            <person name="O'Sullivan D."/>
            <person name="Steele J."/>
            <person name="Unlu G."/>
            <person name="Saier M.H. Jr."/>
            <person name="Klaenhammer T."/>
            <person name="Richardson P."/>
            <person name="Kozyavkin S."/>
            <person name="Weimer B.C."/>
            <person name="Mills D.A."/>
        </authorList>
    </citation>
    <scope>NUCLEOTIDE SEQUENCE [LARGE SCALE GENOMIC DNA]</scope>
    <source>
        <strain>ATCC 334 / BCRC 17002 / CCUG 31169 / CIP 107868 / KCTC 3260 / NRRL B-441</strain>
    </source>
</reference>
<sequence length="172" mass="19029">MPDYYDIGTIVNTHGIRGEVRVLVTTDFPADRFKVGNTVYVATSPKTALTIQSVREHKGLTLLTFKDYTDINQVLPFKGKKLQVTETALQPLDEGSYYYKDIIGLTVIDEQGQTLGKVNEILSPGPNDVWVIPRSGKSDILLPFLKSVVQSIDLDQKVAHVIVPEGLIDDAD</sequence>
<evidence type="ECO:0000255" key="1">
    <source>
        <dbReference type="HAMAP-Rule" id="MF_00014"/>
    </source>
</evidence>
<accession>Q038J9</accession>
<keyword id="KW-0143">Chaperone</keyword>
<keyword id="KW-0963">Cytoplasm</keyword>
<keyword id="KW-1185">Reference proteome</keyword>
<keyword id="KW-0690">Ribosome biogenesis</keyword>
<keyword id="KW-0698">rRNA processing</keyword>
<feature type="chain" id="PRO_0000321734" description="Ribosome maturation factor RimM">
    <location>
        <begin position="1"/>
        <end position="172"/>
    </location>
</feature>
<feature type="domain" description="PRC barrel" evidence="1">
    <location>
        <begin position="94"/>
        <end position="167"/>
    </location>
</feature>
<comment type="function">
    <text evidence="1">An accessory protein needed during the final step in the assembly of 30S ribosomal subunit, possibly for assembly of the head region. Essential for efficient processing of 16S rRNA. May be needed both before and after RbfA during the maturation of 16S rRNA. It has affinity for free ribosomal 30S subunits but not for 70S ribosomes.</text>
</comment>
<comment type="subunit">
    <text evidence="1">Binds ribosomal protein uS19.</text>
</comment>
<comment type="subcellular location">
    <subcellularLocation>
        <location evidence="1">Cytoplasm</location>
    </subcellularLocation>
</comment>
<comment type="domain">
    <text evidence="1">The PRC barrel domain binds ribosomal protein uS19.</text>
</comment>
<comment type="similarity">
    <text evidence="1">Belongs to the RimM family.</text>
</comment>
<name>RIMM_LACP3</name>
<dbReference type="EMBL" id="CP000423">
    <property type="protein sequence ID" value="ABJ70373.1"/>
    <property type="molecule type" value="Genomic_DNA"/>
</dbReference>
<dbReference type="RefSeq" id="WP_003575298.1">
    <property type="nucleotide sequence ID" value="NC_008526.1"/>
</dbReference>
<dbReference type="RefSeq" id="YP_806815.1">
    <property type="nucleotide sequence ID" value="NC_008526.1"/>
</dbReference>
<dbReference type="SMR" id="Q038J9"/>
<dbReference type="STRING" id="321967.LSEI_1599"/>
<dbReference type="PaxDb" id="321967-LSEI_1599"/>
<dbReference type="KEGG" id="lca:LSEI_1599"/>
<dbReference type="PATRIC" id="fig|321967.11.peg.1580"/>
<dbReference type="HOGENOM" id="CLU_077636_3_1_9"/>
<dbReference type="Proteomes" id="UP000001651">
    <property type="component" value="Chromosome"/>
</dbReference>
<dbReference type="GO" id="GO:0005737">
    <property type="term" value="C:cytoplasm"/>
    <property type="evidence" value="ECO:0007669"/>
    <property type="project" value="UniProtKB-SubCell"/>
</dbReference>
<dbReference type="GO" id="GO:0005840">
    <property type="term" value="C:ribosome"/>
    <property type="evidence" value="ECO:0007669"/>
    <property type="project" value="InterPro"/>
</dbReference>
<dbReference type="GO" id="GO:0043022">
    <property type="term" value="F:ribosome binding"/>
    <property type="evidence" value="ECO:0007669"/>
    <property type="project" value="InterPro"/>
</dbReference>
<dbReference type="GO" id="GO:0042274">
    <property type="term" value="P:ribosomal small subunit biogenesis"/>
    <property type="evidence" value="ECO:0007669"/>
    <property type="project" value="UniProtKB-UniRule"/>
</dbReference>
<dbReference type="GO" id="GO:0006364">
    <property type="term" value="P:rRNA processing"/>
    <property type="evidence" value="ECO:0007669"/>
    <property type="project" value="UniProtKB-UniRule"/>
</dbReference>
<dbReference type="Gene3D" id="2.30.30.240">
    <property type="entry name" value="PRC-barrel domain"/>
    <property type="match status" value="1"/>
</dbReference>
<dbReference type="Gene3D" id="2.40.30.60">
    <property type="entry name" value="RimM"/>
    <property type="match status" value="1"/>
</dbReference>
<dbReference type="HAMAP" id="MF_00014">
    <property type="entry name" value="Ribosome_mat_RimM"/>
    <property type="match status" value="1"/>
</dbReference>
<dbReference type="InterPro" id="IPR011033">
    <property type="entry name" value="PRC_barrel-like_sf"/>
</dbReference>
<dbReference type="InterPro" id="IPR056792">
    <property type="entry name" value="PRC_RimM"/>
</dbReference>
<dbReference type="InterPro" id="IPR011961">
    <property type="entry name" value="RimM"/>
</dbReference>
<dbReference type="InterPro" id="IPR002676">
    <property type="entry name" value="RimM_N"/>
</dbReference>
<dbReference type="InterPro" id="IPR036976">
    <property type="entry name" value="RimM_N_sf"/>
</dbReference>
<dbReference type="InterPro" id="IPR009000">
    <property type="entry name" value="Transl_B-barrel_sf"/>
</dbReference>
<dbReference type="NCBIfam" id="TIGR02273">
    <property type="entry name" value="16S_RimM"/>
    <property type="match status" value="1"/>
</dbReference>
<dbReference type="PANTHER" id="PTHR33692">
    <property type="entry name" value="RIBOSOME MATURATION FACTOR RIMM"/>
    <property type="match status" value="1"/>
</dbReference>
<dbReference type="PANTHER" id="PTHR33692:SF1">
    <property type="entry name" value="RIBOSOME MATURATION FACTOR RIMM"/>
    <property type="match status" value="1"/>
</dbReference>
<dbReference type="Pfam" id="PF24986">
    <property type="entry name" value="PRC_RimM"/>
    <property type="match status" value="1"/>
</dbReference>
<dbReference type="Pfam" id="PF01782">
    <property type="entry name" value="RimM"/>
    <property type="match status" value="1"/>
</dbReference>
<dbReference type="SUPFAM" id="SSF50346">
    <property type="entry name" value="PRC-barrel domain"/>
    <property type="match status" value="1"/>
</dbReference>
<dbReference type="SUPFAM" id="SSF50447">
    <property type="entry name" value="Translation proteins"/>
    <property type="match status" value="1"/>
</dbReference>
<organism>
    <name type="scientific">Lacticaseibacillus paracasei (strain ATCC 334 / BCRC 17002 / CCUG 31169 / CIP 107868 / KCTC 3260 / NRRL B-441)</name>
    <name type="common">Lactobacillus paracasei</name>
    <dbReference type="NCBI Taxonomy" id="321967"/>
    <lineage>
        <taxon>Bacteria</taxon>
        <taxon>Bacillati</taxon>
        <taxon>Bacillota</taxon>
        <taxon>Bacilli</taxon>
        <taxon>Lactobacillales</taxon>
        <taxon>Lactobacillaceae</taxon>
        <taxon>Lacticaseibacillus</taxon>
    </lineage>
</organism>
<gene>
    <name evidence="1" type="primary">rimM</name>
    <name type="ordered locus">LSEI_1599</name>
</gene>
<protein>
    <recommendedName>
        <fullName evidence="1">Ribosome maturation factor RimM</fullName>
    </recommendedName>
</protein>